<proteinExistence type="evidence at protein level"/>
<comment type="function">
    <text evidence="2 6 9">Palmitoyltransferase that could catalyze the addition of palmitate onto various protein substrates and be involved in a variety of cellular processes (Probable). Palmitoyltransferase that mediates palmitoylation of KCNMA1, regulating localization of KCNMA1 to the plasma membrane (By similarity). May be involved in NOS1 regulation and targeting to the synaptic membrane (PubMed:15105416).</text>
</comment>
<comment type="catalytic activity">
    <reaction evidence="2">
        <text>L-cysteinyl-[protein] + hexadecanoyl-CoA = S-hexadecanoyl-L-cysteinyl-[protein] + CoA</text>
        <dbReference type="Rhea" id="RHEA:36683"/>
        <dbReference type="Rhea" id="RHEA-COMP:10131"/>
        <dbReference type="Rhea" id="RHEA-COMP:11032"/>
        <dbReference type="ChEBI" id="CHEBI:29950"/>
        <dbReference type="ChEBI" id="CHEBI:57287"/>
        <dbReference type="ChEBI" id="CHEBI:57379"/>
        <dbReference type="ChEBI" id="CHEBI:74151"/>
        <dbReference type="EC" id="2.3.1.225"/>
    </reaction>
    <physiologicalReaction direction="left-to-right" evidence="2">
        <dbReference type="Rhea" id="RHEA:36684"/>
    </physiologicalReaction>
</comment>
<comment type="subunit">
    <text evidence="6">Interacts with NOS1.</text>
</comment>
<comment type="subcellular location">
    <subcellularLocation>
        <location evidence="2">Golgi apparatus membrane</location>
        <topology evidence="3">Multi-pass membrane protein</topology>
    </subcellularLocation>
    <subcellularLocation>
        <location evidence="2">Golgi apparatus</location>
        <location evidence="2">trans-Golgi network membrane</location>
        <topology evidence="3">Multi-pass membrane protein</topology>
    </subcellularLocation>
    <text evidence="6">Neuronal soma and dendrites.</text>
</comment>
<comment type="alternative products">
    <event type="alternative splicing"/>
    <isoform>
        <id>Q76IC6-1</id>
        <name>L</name>
        <sequence type="displayed"/>
    </isoform>
    <isoform>
        <id>Q76IC6-2</id>
        <name>S</name>
        <sequence type="described" ref="VSP_016279"/>
    </isoform>
</comment>
<comment type="tissue specificity">
    <text evidence="6">Expressed in the brain (at protein level), with highest levels in olfactory bulb, piriform cortex and hippocampus.</text>
</comment>
<comment type="developmental stage">
    <text evidence="6">Highly expressed during the first week after birth.</text>
</comment>
<comment type="domain">
    <text evidence="1">The DHHC domain is required for palmitoyltransferase activity.</text>
</comment>
<comment type="similarity">
    <text evidence="8">Belongs to the DHHC palmitoyltransferase family.</text>
</comment>
<protein>
    <recommendedName>
        <fullName evidence="8">Palmitoyltransferase ZDHHC23</fullName>
        <ecNumber evidence="2">2.3.1.225</ecNumber>
    </recommendedName>
    <alternativeName>
        <fullName evidence="7">NNOS-interacting DHHC domain-containing protein with dendritic mRNA</fullName>
    </alternativeName>
    <alternativeName>
        <fullName evidence="10">Zinc finger DHHC domain-containing protein 23</fullName>
        <shortName>DHHC-23</shortName>
        <shortName>zDHHC23</shortName>
    </alternativeName>
</protein>
<gene>
    <name evidence="10" type="primary">Zdhhc23</name>
    <name evidence="7" type="synonym">Nidd</name>
</gene>
<name>ZDH23_RAT</name>
<accession>Q76IC6</accession>
<accession>Q2TGI7</accession>
<feature type="chain" id="PRO_0000212914" description="Palmitoyltransferase ZDHHC23">
    <location>
        <begin position="1"/>
        <end position="429"/>
    </location>
</feature>
<feature type="topological domain" description="Cytoplasmic" evidence="8">
    <location>
        <begin position="1"/>
        <end position="81"/>
    </location>
</feature>
<feature type="transmembrane region" description="Helical" evidence="3">
    <location>
        <begin position="82"/>
        <end position="102"/>
    </location>
</feature>
<feature type="topological domain" description="Lumenal" evidence="8">
    <location>
        <position position="103"/>
    </location>
</feature>
<feature type="transmembrane region" description="Helical" evidence="3">
    <location>
        <begin position="104"/>
        <end position="124"/>
    </location>
</feature>
<feature type="topological domain" description="Cytoplasmic" evidence="8">
    <location>
        <begin position="125"/>
        <end position="130"/>
    </location>
</feature>
<feature type="transmembrane region" description="Helical" evidence="3">
    <location>
        <begin position="131"/>
        <end position="151"/>
    </location>
</feature>
<feature type="topological domain" description="Lumenal" evidence="8">
    <location>
        <begin position="152"/>
        <end position="159"/>
    </location>
</feature>
<feature type="transmembrane region" description="Helical" evidence="3">
    <location>
        <begin position="160"/>
        <end position="180"/>
    </location>
</feature>
<feature type="topological domain" description="Cytoplasmic" evidence="8">
    <location>
        <begin position="181"/>
        <end position="296"/>
    </location>
</feature>
<feature type="transmembrane region" description="Helical" evidence="3">
    <location>
        <begin position="297"/>
        <end position="317"/>
    </location>
</feature>
<feature type="topological domain" description="Lumenal" evidence="8">
    <location>
        <begin position="318"/>
        <end position="347"/>
    </location>
</feature>
<feature type="transmembrane region" description="Helical" evidence="3">
    <location>
        <begin position="348"/>
        <end position="368"/>
    </location>
</feature>
<feature type="topological domain" description="Cytoplasmic" evidence="8">
    <location>
        <begin position="369"/>
        <end position="429"/>
    </location>
</feature>
<feature type="domain" description="DHHC" evidence="4">
    <location>
        <begin position="253"/>
        <end position="303"/>
    </location>
</feature>
<feature type="region of interest" description="Disordered" evidence="5">
    <location>
        <begin position="212"/>
        <end position="247"/>
    </location>
</feature>
<feature type="region of interest" description="Interaction with NOS1" evidence="6">
    <location>
        <begin position="426"/>
        <end position="429"/>
    </location>
</feature>
<feature type="compositionally biased region" description="Polar residues" evidence="5">
    <location>
        <begin position="221"/>
        <end position="230"/>
    </location>
</feature>
<feature type="active site" description="S-palmitoyl cysteine intermediate" evidence="4">
    <location>
        <position position="283"/>
    </location>
</feature>
<feature type="splice variant" id="VSP_016279" description="In isoform S." evidence="7">
    <location>
        <begin position="286"/>
        <end position="322"/>
    </location>
</feature>
<feature type="sequence conflict" description="In Ref. 1; BAD16732." evidence="8" ref="1">
    <original>L</original>
    <variation>V</variation>
    <location>
        <position position="260"/>
    </location>
</feature>
<dbReference type="EC" id="2.3.1.225" evidence="2"/>
<dbReference type="EMBL" id="AB098078">
    <property type="protein sequence ID" value="BAD16732.1"/>
    <property type="molecule type" value="mRNA"/>
</dbReference>
<dbReference type="EMBL" id="AY886538">
    <property type="protein sequence ID" value="AAX73400.1"/>
    <property type="molecule type" value="mRNA"/>
</dbReference>
<dbReference type="EMBL" id="AABR06068599">
    <property type="status" value="NOT_ANNOTATED_CDS"/>
    <property type="molecule type" value="Genomic_DNA"/>
</dbReference>
<dbReference type="RefSeq" id="NP_998792.2">
    <molecule id="Q76IC6-1"/>
    <property type="nucleotide sequence ID" value="NM_213627.2"/>
</dbReference>
<dbReference type="RefSeq" id="XP_008766961.1">
    <molecule id="Q76IC6-1"/>
    <property type="nucleotide sequence ID" value="XM_008768739.4"/>
</dbReference>
<dbReference type="RefSeq" id="XP_008766962.1">
    <molecule id="Q76IC6-1"/>
    <property type="nucleotide sequence ID" value="XM_008768740.4"/>
</dbReference>
<dbReference type="RefSeq" id="XP_038944470.1">
    <molecule id="Q76IC6-2"/>
    <property type="nucleotide sequence ID" value="XM_039088542.2"/>
</dbReference>
<dbReference type="RefSeq" id="XP_063126742.1">
    <molecule id="Q76IC6-1"/>
    <property type="nucleotide sequence ID" value="XM_063270672.1"/>
</dbReference>
<dbReference type="FunCoup" id="Q76IC6">
    <property type="interactions" value="1412"/>
</dbReference>
<dbReference type="STRING" id="10116.ENSRNOP00000076233"/>
<dbReference type="iPTMnet" id="Q76IC6"/>
<dbReference type="PhosphoSitePlus" id="Q76IC6"/>
<dbReference type="PaxDb" id="10116-ENSRNOP00000036655"/>
<dbReference type="GeneID" id="363783"/>
<dbReference type="KEGG" id="rno:363783"/>
<dbReference type="UCSC" id="RGD:1303254">
    <molecule id="Q76IC6-1"/>
    <property type="organism name" value="rat"/>
</dbReference>
<dbReference type="AGR" id="RGD:1303254"/>
<dbReference type="CTD" id="254887"/>
<dbReference type="RGD" id="1303254">
    <property type="gene designation" value="Zdhhc23"/>
</dbReference>
<dbReference type="VEuPathDB" id="HostDB:ENSRNOG00000060348"/>
<dbReference type="eggNOG" id="KOG1311">
    <property type="taxonomic scope" value="Eukaryota"/>
</dbReference>
<dbReference type="HOGENOM" id="CLU_055455_0_0_1"/>
<dbReference type="InParanoid" id="Q76IC6"/>
<dbReference type="OrthoDB" id="430659at2759"/>
<dbReference type="TreeFam" id="TF354316"/>
<dbReference type="PRO" id="PR:Q76IC6"/>
<dbReference type="Proteomes" id="UP000002494">
    <property type="component" value="Chromosome 11"/>
</dbReference>
<dbReference type="Bgee" id="ENSRNOG00000060348">
    <property type="expression patterns" value="Expressed in liver and 20 other cell types or tissues"/>
</dbReference>
<dbReference type="GO" id="GO:0005783">
    <property type="term" value="C:endoplasmic reticulum"/>
    <property type="evidence" value="ECO:0000318"/>
    <property type="project" value="GO_Central"/>
</dbReference>
<dbReference type="GO" id="GO:0005794">
    <property type="term" value="C:Golgi apparatus"/>
    <property type="evidence" value="ECO:0000318"/>
    <property type="project" value="GO_Central"/>
</dbReference>
<dbReference type="GO" id="GO:0000139">
    <property type="term" value="C:Golgi membrane"/>
    <property type="evidence" value="ECO:0007669"/>
    <property type="project" value="UniProtKB-SubCell"/>
</dbReference>
<dbReference type="GO" id="GO:0019706">
    <property type="term" value="F:protein-cysteine S-palmitoyltransferase activity"/>
    <property type="evidence" value="ECO:0000318"/>
    <property type="project" value="GO_Central"/>
</dbReference>
<dbReference type="GO" id="GO:0072659">
    <property type="term" value="P:protein localization to plasma membrane"/>
    <property type="evidence" value="ECO:0000266"/>
    <property type="project" value="RGD"/>
</dbReference>
<dbReference type="GO" id="GO:0006612">
    <property type="term" value="P:protein targeting to membrane"/>
    <property type="evidence" value="ECO:0000318"/>
    <property type="project" value="GO_Central"/>
</dbReference>
<dbReference type="InterPro" id="IPR001594">
    <property type="entry name" value="Palmitoyltrfase_DHHC"/>
</dbReference>
<dbReference type="InterPro" id="IPR039859">
    <property type="entry name" value="PFA4/ZDH16/20/ERF2-like"/>
</dbReference>
<dbReference type="PANTHER" id="PTHR22883:SF475">
    <property type="entry name" value="PALMITOYLTRANSFERASE ZDHHC23"/>
    <property type="match status" value="1"/>
</dbReference>
<dbReference type="PANTHER" id="PTHR22883">
    <property type="entry name" value="ZINC FINGER DHHC DOMAIN CONTAINING PROTEIN"/>
    <property type="match status" value="1"/>
</dbReference>
<dbReference type="Pfam" id="PF01529">
    <property type="entry name" value="DHHC"/>
    <property type="match status" value="1"/>
</dbReference>
<dbReference type="PROSITE" id="PS50216">
    <property type="entry name" value="DHHC"/>
    <property type="match status" value="1"/>
</dbReference>
<keyword id="KW-0012">Acyltransferase</keyword>
<keyword id="KW-0025">Alternative splicing</keyword>
<keyword id="KW-0333">Golgi apparatus</keyword>
<keyword id="KW-0449">Lipoprotein</keyword>
<keyword id="KW-0472">Membrane</keyword>
<keyword id="KW-0564">Palmitate</keyword>
<keyword id="KW-1185">Reference proteome</keyword>
<keyword id="KW-0808">Transferase</keyword>
<keyword id="KW-0812">Transmembrane</keyword>
<keyword id="KW-1133">Transmembrane helix</keyword>
<organism>
    <name type="scientific">Rattus norvegicus</name>
    <name type="common">Rat</name>
    <dbReference type="NCBI Taxonomy" id="10116"/>
    <lineage>
        <taxon>Eukaryota</taxon>
        <taxon>Metazoa</taxon>
        <taxon>Chordata</taxon>
        <taxon>Craniata</taxon>
        <taxon>Vertebrata</taxon>
        <taxon>Euteleostomi</taxon>
        <taxon>Mammalia</taxon>
        <taxon>Eutheria</taxon>
        <taxon>Euarchontoglires</taxon>
        <taxon>Glires</taxon>
        <taxon>Rodentia</taxon>
        <taxon>Myomorpha</taxon>
        <taxon>Muroidea</taxon>
        <taxon>Muridae</taxon>
        <taxon>Murinae</taxon>
        <taxon>Rattus</taxon>
    </lineage>
</organism>
<reference key="1">
    <citation type="journal article" date="2004" name="J. Biol. Chem.">
        <title>NIDD, a novel DHHC-containing protein, targets neuronal nitric-oxide synthase (nNOS) to the synaptic membrane through a PDZ-dependent interaction and regulates nNOS activity.</title>
        <authorList>
            <person name="Saitoh F."/>
            <person name="Tian Q.B."/>
            <person name="Okano A."/>
            <person name="Sakagami H."/>
            <person name="Kondo H."/>
            <person name="Suzuki T."/>
        </authorList>
    </citation>
    <scope>NUCLEOTIDE SEQUENCE [MRNA] (ISOFORMS L AND S)</scope>
    <scope>DEVELOPMENTAL STAGE</scope>
    <scope>TISSUE SPECIFICITY</scope>
    <scope>SUBCELLULAR LOCATION</scope>
    <scope>INTERACTION WITH NOS1</scope>
    <scope>FUNCTION</scope>
</reference>
<reference key="2">
    <citation type="submission" date="2005-01" db="EMBL/GenBank/DDBJ databases">
        <title>A superfamily of membrane-associated DHHC type zinc finger proteins.</title>
        <authorList>
            <person name="Huang C.-H."/>
            <person name="Chen Y."/>
            <person name="Ye T."/>
        </authorList>
    </citation>
    <scope>NUCLEOTIDE SEQUENCE [MRNA]</scope>
</reference>
<reference key="3">
    <citation type="journal article" date="2004" name="Nature">
        <title>Genome sequence of the Brown Norway rat yields insights into mammalian evolution.</title>
        <authorList>
            <person name="Gibbs R.A."/>
            <person name="Weinstock G.M."/>
            <person name="Metzker M.L."/>
            <person name="Muzny D.M."/>
            <person name="Sodergren E.J."/>
            <person name="Scherer S."/>
            <person name="Scott G."/>
            <person name="Steffen D."/>
            <person name="Worley K.C."/>
            <person name="Burch P.E."/>
            <person name="Okwuonu G."/>
            <person name="Hines S."/>
            <person name="Lewis L."/>
            <person name="Deramo C."/>
            <person name="Delgado O."/>
            <person name="Dugan-Rocha S."/>
            <person name="Miner G."/>
            <person name="Morgan M."/>
            <person name="Hawes A."/>
            <person name="Gill R."/>
            <person name="Holt R.A."/>
            <person name="Adams M.D."/>
            <person name="Amanatides P.G."/>
            <person name="Baden-Tillson H."/>
            <person name="Barnstead M."/>
            <person name="Chin S."/>
            <person name="Evans C.A."/>
            <person name="Ferriera S."/>
            <person name="Fosler C."/>
            <person name="Glodek A."/>
            <person name="Gu Z."/>
            <person name="Jennings D."/>
            <person name="Kraft C.L."/>
            <person name="Nguyen T."/>
            <person name="Pfannkoch C.M."/>
            <person name="Sitter C."/>
            <person name="Sutton G.G."/>
            <person name="Venter J.C."/>
            <person name="Woodage T."/>
            <person name="Smith D."/>
            <person name="Lee H.-M."/>
            <person name="Gustafson E."/>
            <person name="Cahill P."/>
            <person name="Kana A."/>
            <person name="Doucette-Stamm L."/>
            <person name="Weinstock K."/>
            <person name="Fechtel K."/>
            <person name="Weiss R.B."/>
            <person name="Dunn D.M."/>
            <person name="Green E.D."/>
            <person name="Blakesley R.W."/>
            <person name="Bouffard G.G."/>
            <person name="De Jong P.J."/>
            <person name="Osoegawa K."/>
            <person name="Zhu B."/>
            <person name="Marra M."/>
            <person name="Schein J."/>
            <person name="Bosdet I."/>
            <person name="Fjell C."/>
            <person name="Jones S."/>
            <person name="Krzywinski M."/>
            <person name="Mathewson C."/>
            <person name="Siddiqui A."/>
            <person name="Wye N."/>
            <person name="McPherson J."/>
            <person name="Zhao S."/>
            <person name="Fraser C.M."/>
            <person name="Shetty J."/>
            <person name="Shatsman S."/>
            <person name="Geer K."/>
            <person name="Chen Y."/>
            <person name="Abramzon S."/>
            <person name="Nierman W.C."/>
            <person name="Havlak P.H."/>
            <person name="Chen R."/>
            <person name="Durbin K.J."/>
            <person name="Egan A."/>
            <person name="Ren Y."/>
            <person name="Song X.-Z."/>
            <person name="Li B."/>
            <person name="Liu Y."/>
            <person name="Qin X."/>
            <person name="Cawley S."/>
            <person name="Cooney A.J."/>
            <person name="D'Souza L.M."/>
            <person name="Martin K."/>
            <person name="Wu J.Q."/>
            <person name="Gonzalez-Garay M.L."/>
            <person name="Jackson A.R."/>
            <person name="Kalafus K.J."/>
            <person name="McLeod M.P."/>
            <person name="Milosavljevic A."/>
            <person name="Virk D."/>
            <person name="Volkov A."/>
            <person name="Wheeler D.A."/>
            <person name="Zhang Z."/>
            <person name="Bailey J.A."/>
            <person name="Eichler E.E."/>
            <person name="Tuzun E."/>
            <person name="Birney E."/>
            <person name="Mongin E."/>
            <person name="Ureta-Vidal A."/>
            <person name="Woodwark C."/>
            <person name="Zdobnov E."/>
            <person name="Bork P."/>
            <person name="Suyama M."/>
            <person name="Torrents D."/>
            <person name="Alexandersson M."/>
            <person name="Trask B.J."/>
            <person name="Young J.M."/>
            <person name="Huang H."/>
            <person name="Wang H."/>
            <person name="Xing H."/>
            <person name="Daniels S."/>
            <person name="Gietzen D."/>
            <person name="Schmidt J."/>
            <person name="Stevens K."/>
            <person name="Vitt U."/>
            <person name="Wingrove J."/>
            <person name="Camara F."/>
            <person name="Mar Alba M."/>
            <person name="Abril J.F."/>
            <person name="Guigo R."/>
            <person name="Smit A."/>
            <person name="Dubchak I."/>
            <person name="Rubin E.M."/>
            <person name="Couronne O."/>
            <person name="Poliakov A."/>
            <person name="Huebner N."/>
            <person name="Ganten D."/>
            <person name="Goesele C."/>
            <person name="Hummel O."/>
            <person name="Kreitler T."/>
            <person name="Lee Y.-A."/>
            <person name="Monti J."/>
            <person name="Schulz H."/>
            <person name="Zimdahl H."/>
            <person name="Himmelbauer H."/>
            <person name="Lehrach H."/>
            <person name="Jacob H.J."/>
            <person name="Bromberg S."/>
            <person name="Gullings-Handley J."/>
            <person name="Jensen-Seaman M.I."/>
            <person name="Kwitek A.E."/>
            <person name="Lazar J."/>
            <person name="Pasko D."/>
            <person name="Tonellato P.J."/>
            <person name="Twigger S."/>
            <person name="Ponting C.P."/>
            <person name="Duarte J.M."/>
            <person name="Rice S."/>
            <person name="Goodstadt L."/>
            <person name="Beatson S.A."/>
            <person name="Emes R.D."/>
            <person name="Winter E.E."/>
            <person name="Webber C."/>
            <person name="Brandt P."/>
            <person name="Nyakatura G."/>
            <person name="Adetobi M."/>
            <person name="Chiaromonte F."/>
            <person name="Elnitski L."/>
            <person name="Eswara P."/>
            <person name="Hardison R.C."/>
            <person name="Hou M."/>
            <person name="Kolbe D."/>
            <person name="Makova K."/>
            <person name="Miller W."/>
            <person name="Nekrutenko A."/>
            <person name="Riemer C."/>
            <person name="Schwartz S."/>
            <person name="Taylor J."/>
            <person name="Yang S."/>
            <person name="Zhang Y."/>
            <person name="Lindpaintner K."/>
            <person name="Andrews T.D."/>
            <person name="Caccamo M."/>
            <person name="Clamp M."/>
            <person name="Clarke L."/>
            <person name="Curwen V."/>
            <person name="Durbin R.M."/>
            <person name="Eyras E."/>
            <person name="Searle S.M."/>
            <person name="Cooper G.M."/>
            <person name="Batzoglou S."/>
            <person name="Brudno M."/>
            <person name="Sidow A."/>
            <person name="Stone E.A."/>
            <person name="Payseur B.A."/>
            <person name="Bourque G."/>
            <person name="Lopez-Otin C."/>
            <person name="Puente X.S."/>
            <person name="Chakrabarti K."/>
            <person name="Chatterji S."/>
            <person name="Dewey C."/>
            <person name="Pachter L."/>
            <person name="Bray N."/>
            <person name="Yap V.B."/>
            <person name="Caspi A."/>
            <person name="Tesler G."/>
            <person name="Pevzner P.A."/>
            <person name="Haussler D."/>
            <person name="Roskin K.M."/>
            <person name="Baertsch R."/>
            <person name="Clawson H."/>
            <person name="Furey T.S."/>
            <person name="Hinrichs A.S."/>
            <person name="Karolchik D."/>
            <person name="Kent W.J."/>
            <person name="Rosenbloom K.R."/>
            <person name="Trumbower H."/>
            <person name="Weirauch M."/>
            <person name="Cooper D.N."/>
            <person name="Stenson P.D."/>
            <person name="Ma B."/>
            <person name="Brent M."/>
            <person name="Arumugam M."/>
            <person name="Shteynberg D."/>
            <person name="Copley R.R."/>
            <person name="Taylor M.S."/>
            <person name="Riethman H."/>
            <person name="Mudunuri U."/>
            <person name="Peterson J."/>
            <person name="Guyer M."/>
            <person name="Felsenfeld A."/>
            <person name="Old S."/>
            <person name="Mockrin S."/>
            <person name="Collins F.S."/>
        </authorList>
    </citation>
    <scope>NUCLEOTIDE SEQUENCE [LARGE SCALE GENOMIC DNA]</scope>
    <source>
        <strain>Brown Norway</strain>
    </source>
</reference>
<sequence length="429" mass="48473">MKPVKKKKTEEPELEPLCCCEYIDRNGEKNHVAACLCDCQDLDEGCDRWLTCKSLRPETCERITDTISDRLRIPWLRGAKKVNISILPPLVLLPVLLRVASWHFLLGVVVLTSLPMLALWYYYLTHRRKEQTLFFLSLGLFSLGYMYYVFLQEVVPQGHVGPAQLALLTCGLFLILVALYRAKKNPGYLSNPACNDKSPSNSQIECPIKKGQEKTKGFPGTDTSGSLNNRTLKDDAKGSSRVGLDSPAKSKEDWCAKCQLVRPARAWHCRICGICVRRMDHHCVWINSCVGESNHQAFILALSIFLLTSVYGISLTLNTICRDRSLFTALFYCPGVYANYSSALSFTCVWYSVIITAGMAYIFLIQLINISYNVTEREVQQALRQKTGRRLLCGLIVDTGQYNRGFLRNWLQFSTLGTRTVHTPAEDIV</sequence>
<evidence type="ECO:0000250" key="1">
    <source>
        <dbReference type="UniProtKB" id="Q8IUH5"/>
    </source>
</evidence>
<evidence type="ECO:0000250" key="2">
    <source>
        <dbReference type="UniProtKB" id="Q8IYP9"/>
    </source>
</evidence>
<evidence type="ECO:0000255" key="3"/>
<evidence type="ECO:0000255" key="4">
    <source>
        <dbReference type="PROSITE-ProRule" id="PRU00067"/>
    </source>
</evidence>
<evidence type="ECO:0000256" key="5">
    <source>
        <dbReference type="SAM" id="MobiDB-lite"/>
    </source>
</evidence>
<evidence type="ECO:0000269" key="6">
    <source>
    </source>
</evidence>
<evidence type="ECO:0000303" key="7">
    <source>
    </source>
</evidence>
<evidence type="ECO:0000305" key="8"/>
<evidence type="ECO:0000305" key="9">
    <source>
    </source>
</evidence>
<evidence type="ECO:0000312" key="10">
    <source>
        <dbReference type="RGD" id="1303254"/>
    </source>
</evidence>